<proteinExistence type="inferred from homology"/>
<comment type="function">
    <text evidence="1">Forms part of the ribosomal stalk, playing a central role in the interaction of the ribosome with GTP-bound translation factors.</text>
</comment>
<comment type="subunit">
    <text evidence="1">Part of the ribosomal stalk of the 50S ribosomal subunit. The N-terminus interacts with L11 and the large rRNA to form the base of the stalk. The C-terminus forms an elongated spine to which L12 dimers bind in a sequential fashion forming a multimeric L10(L12)X complex.</text>
</comment>
<comment type="similarity">
    <text evidence="1">Belongs to the universal ribosomal protein uL10 family.</text>
</comment>
<dbReference type="EMBL" id="CP000036">
    <property type="protein sequence ID" value="ABB68446.1"/>
    <property type="molecule type" value="Genomic_DNA"/>
</dbReference>
<dbReference type="RefSeq" id="WP_001207201.1">
    <property type="nucleotide sequence ID" value="NC_007613.1"/>
</dbReference>
<dbReference type="SMR" id="Q31U12"/>
<dbReference type="GeneID" id="93777909"/>
<dbReference type="KEGG" id="sbo:SBO_4005"/>
<dbReference type="HOGENOM" id="CLU_092227_0_2_6"/>
<dbReference type="Proteomes" id="UP000007067">
    <property type="component" value="Chromosome"/>
</dbReference>
<dbReference type="GO" id="GO:0015934">
    <property type="term" value="C:large ribosomal subunit"/>
    <property type="evidence" value="ECO:0007669"/>
    <property type="project" value="InterPro"/>
</dbReference>
<dbReference type="GO" id="GO:0070180">
    <property type="term" value="F:large ribosomal subunit rRNA binding"/>
    <property type="evidence" value="ECO:0007669"/>
    <property type="project" value="UniProtKB-UniRule"/>
</dbReference>
<dbReference type="GO" id="GO:0003735">
    <property type="term" value="F:structural constituent of ribosome"/>
    <property type="evidence" value="ECO:0007669"/>
    <property type="project" value="InterPro"/>
</dbReference>
<dbReference type="GO" id="GO:0006412">
    <property type="term" value="P:translation"/>
    <property type="evidence" value="ECO:0007669"/>
    <property type="project" value="UniProtKB-UniRule"/>
</dbReference>
<dbReference type="CDD" id="cd05797">
    <property type="entry name" value="Ribosomal_L10"/>
    <property type="match status" value="1"/>
</dbReference>
<dbReference type="FunFam" id="3.30.70.1730:FF:000001">
    <property type="entry name" value="50S ribosomal protein L10"/>
    <property type="match status" value="1"/>
</dbReference>
<dbReference type="Gene3D" id="3.30.70.1730">
    <property type="match status" value="1"/>
</dbReference>
<dbReference type="Gene3D" id="6.10.250.2350">
    <property type="match status" value="1"/>
</dbReference>
<dbReference type="HAMAP" id="MF_00362">
    <property type="entry name" value="Ribosomal_uL10"/>
    <property type="match status" value="1"/>
</dbReference>
<dbReference type="InterPro" id="IPR001790">
    <property type="entry name" value="Ribosomal_uL10"/>
</dbReference>
<dbReference type="InterPro" id="IPR043141">
    <property type="entry name" value="Ribosomal_uL10-like_sf"/>
</dbReference>
<dbReference type="InterPro" id="IPR022973">
    <property type="entry name" value="Ribosomal_uL10_bac"/>
</dbReference>
<dbReference type="InterPro" id="IPR047865">
    <property type="entry name" value="Ribosomal_uL10_bac_type"/>
</dbReference>
<dbReference type="InterPro" id="IPR002363">
    <property type="entry name" value="Ribosomal_uL10_CS_bac"/>
</dbReference>
<dbReference type="NCBIfam" id="NF000955">
    <property type="entry name" value="PRK00099.1-1"/>
    <property type="match status" value="1"/>
</dbReference>
<dbReference type="PANTHER" id="PTHR11560">
    <property type="entry name" value="39S RIBOSOMAL PROTEIN L10, MITOCHONDRIAL"/>
    <property type="match status" value="1"/>
</dbReference>
<dbReference type="Pfam" id="PF00466">
    <property type="entry name" value="Ribosomal_L10"/>
    <property type="match status" value="1"/>
</dbReference>
<dbReference type="SUPFAM" id="SSF160369">
    <property type="entry name" value="Ribosomal protein L10-like"/>
    <property type="match status" value="1"/>
</dbReference>
<dbReference type="PROSITE" id="PS01109">
    <property type="entry name" value="RIBOSOMAL_L10"/>
    <property type="match status" value="1"/>
</dbReference>
<gene>
    <name evidence="1" type="primary">rplJ</name>
    <name type="ordered locus">SBO_4005</name>
</gene>
<sequence length="165" mass="17712">MALNLQDKQAIVAEVSEVAKGALSAVVADSRGVTVDKMTELRKAGREAGVYMRVVRNTLLRRAVEGTPFECLKDAFVGPTLIAYSMEHPGAAARLFKEFAKANAKFEVKAAAFEGELIPASQIDRLATLPTYEEAIARLMATMKEASAGKLVRTLAAVRDAKEAA</sequence>
<accession>Q31U12</accession>
<feature type="chain" id="PRO_0000234885" description="Large ribosomal subunit protein uL10">
    <location>
        <begin position="1"/>
        <end position="165"/>
    </location>
</feature>
<feature type="modified residue" description="N6-acetyllysine" evidence="1">
    <location>
        <position position="37"/>
    </location>
</feature>
<feature type="modified residue" description="N6-acetyllysine" evidence="1">
    <location>
        <position position="105"/>
    </location>
</feature>
<keyword id="KW-0007">Acetylation</keyword>
<keyword id="KW-0687">Ribonucleoprotein</keyword>
<keyword id="KW-0689">Ribosomal protein</keyword>
<keyword id="KW-0694">RNA-binding</keyword>
<keyword id="KW-0699">rRNA-binding</keyword>
<reference key="1">
    <citation type="journal article" date="2005" name="Nucleic Acids Res.">
        <title>Genome dynamics and diversity of Shigella species, the etiologic agents of bacillary dysentery.</title>
        <authorList>
            <person name="Yang F."/>
            <person name="Yang J."/>
            <person name="Zhang X."/>
            <person name="Chen L."/>
            <person name="Jiang Y."/>
            <person name="Yan Y."/>
            <person name="Tang X."/>
            <person name="Wang J."/>
            <person name="Xiong Z."/>
            <person name="Dong J."/>
            <person name="Xue Y."/>
            <person name="Zhu Y."/>
            <person name="Xu X."/>
            <person name="Sun L."/>
            <person name="Chen S."/>
            <person name="Nie H."/>
            <person name="Peng J."/>
            <person name="Xu J."/>
            <person name="Wang Y."/>
            <person name="Yuan Z."/>
            <person name="Wen Y."/>
            <person name="Yao Z."/>
            <person name="Shen Y."/>
            <person name="Qiang B."/>
            <person name="Hou Y."/>
            <person name="Yu J."/>
            <person name="Jin Q."/>
        </authorList>
    </citation>
    <scope>NUCLEOTIDE SEQUENCE [LARGE SCALE GENOMIC DNA]</scope>
    <source>
        <strain>Sb227</strain>
    </source>
</reference>
<protein>
    <recommendedName>
        <fullName evidence="1">Large ribosomal subunit protein uL10</fullName>
    </recommendedName>
    <alternativeName>
        <fullName evidence="2">50S ribosomal protein L10</fullName>
    </alternativeName>
</protein>
<evidence type="ECO:0000255" key="1">
    <source>
        <dbReference type="HAMAP-Rule" id="MF_00362"/>
    </source>
</evidence>
<evidence type="ECO:0000305" key="2"/>
<name>RL10_SHIBS</name>
<organism>
    <name type="scientific">Shigella boydii serotype 4 (strain Sb227)</name>
    <dbReference type="NCBI Taxonomy" id="300268"/>
    <lineage>
        <taxon>Bacteria</taxon>
        <taxon>Pseudomonadati</taxon>
        <taxon>Pseudomonadota</taxon>
        <taxon>Gammaproteobacteria</taxon>
        <taxon>Enterobacterales</taxon>
        <taxon>Enterobacteriaceae</taxon>
        <taxon>Shigella</taxon>
    </lineage>
</organism>